<accession>A1S237</accession>
<dbReference type="EMBL" id="CP000507">
    <property type="protein sequence ID" value="ABL98443.1"/>
    <property type="molecule type" value="Genomic_DNA"/>
</dbReference>
<dbReference type="RefSeq" id="WP_011758353.1">
    <property type="nucleotide sequence ID" value="NC_008700.1"/>
</dbReference>
<dbReference type="SMR" id="A1S237"/>
<dbReference type="STRING" id="326297.Sama_0232"/>
<dbReference type="KEGG" id="saz:Sama_0232"/>
<dbReference type="eggNOG" id="COG0200">
    <property type="taxonomic scope" value="Bacteria"/>
</dbReference>
<dbReference type="HOGENOM" id="CLU_055188_4_2_6"/>
<dbReference type="OrthoDB" id="9810293at2"/>
<dbReference type="Proteomes" id="UP000009175">
    <property type="component" value="Chromosome"/>
</dbReference>
<dbReference type="GO" id="GO:0022625">
    <property type="term" value="C:cytosolic large ribosomal subunit"/>
    <property type="evidence" value="ECO:0007669"/>
    <property type="project" value="TreeGrafter"/>
</dbReference>
<dbReference type="GO" id="GO:0019843">
    <property type="term" value="F:rRNA binding"/>
    <property type="evidence" value="ECO:0007669"/>
    <property type="project" value="UniProtKB-UniRule"/>
</dbReference>
<dbReference type="GO" id="GO:0003735">
    <property type="term" value="F:structural constituent of ribosome"/>
    <property type="evidence" value="ECO:0007669"/>
    <property type="project" value="InterPro"/>
</dbReference>
<dbReference type="GO" id="GO:0006412">
    <property type="term" value="P:translation"/>
    <property type="evidence" value="ECO:0007669"/>
    <property type="project" value="UniProtKB-UniRule"/>
</dbReference>
<dbReference type="FunFam" id="3.100.10.10:FF:000003">
    <property type="entry name" value="50S ribosomal protein L15"/>
    <property type="match status" value="1"/>
</dbReference>
<dbReference type="Gene3D" id="3.100.10.10">
    <property type="match status" value="1"/>
</dbReference>
<dbReference type="HAMAP" id="MF_01341">
    <property type="entry name" value="Ribosomal_uL15"/>
    <property type="match status" value="1"/>
</dbReference>
<dbReference type="InterPro" id="IPR030878">
    <property type="entry name" value="Ribosomal_uL15"/>
</dbReference>
<dbReference type="InterPro" id="IPR021131">
    <property type="entry name" value="Ribosomal_uL15/eL18"/>
</dbReference>
<dbReference type="InterPro" id="IPR036227">
    <property type="entry name" value="Ribosomal_uL15/eL18_sf"/>
</dbReference>
<dbReference type="InterPro" id="IPR005749">
    <property type="entry name" value="Ribosomal_uL15_bac-type"/>
</dbReference>
<dbReference type="InterPro" id="IPR001196">
    <property type="entry name" value="Ribosomal_uL15_CS"/>
</dbReference>
<dbReference type="NCBIfam" id="TIGR01071">
    <property type="entry name" value="rplO_bact"/>
    <property type="match status" value="1"/>
</dbReference>
<dbReference type="PANTHER" id="PTHR12934">
    <property type="entry name" value="50S RIBOSOMAL PROTEIN L15"/>
    <property type="match status" value="1"/>
</dbReference>
<dbReference type="PANTHER" id="PTHR12934:SF11">
    <property type="entry name" value="LARGE RIBOSOMAL SUBUNIT PROTEIN UL15M"/>
    <property type="match status" value="1"/>
</dbReference>
<dbReference type="Pfam" id="PF00828">
    <property type="entry name" value="Ribosomal_L27A"/>
    <property type="match status" value="1"/>
</dbReference>
<dbReference type="SUPFAM" id="SSF52080">
    <property type="entry name" value="Ribosomal proteins L15p and L18e"/>
    <property type="match status" value="1"/>
</dbReference>
<dbReference type="PROSITE" id="PS00475">
    <property type="entry name" value="RIBOSOMAL_L15"/>
    <property type="match status" value="1"/>
</dbReference>
<comment type="function">
    <text evidence="1">Binds to the 23S rRNA.</text>
</comment>
<comment type="subunit">
    <text evidence="1">Part of the 50S ribosomal subunit.</text>
</comment>
<comment type="similarity">
    <text evidence="1">Belongs to the universal ribosomal protein uL15 family.</text>
</comment>
<organism>
    <name type="scientific">Shewanella amazonensis (strain ATCC BAA-1098 / SB2B)</name>
    <dbReference type="NCBI Taxonomy" id="326297"/>
    <lineage>
        <taxon>Bacteria</taxon>
        <taxon>Pseudomonadati</taxon>
        <taxon>Pseudomonadota</taxon>
        <taxon>Gammaproteobacteria</taxon>
        <taxon>Alteromonadales</taxon>
        <taxon>Shewanellaceae</taxon>
        <taxon>Shewanella</taxon>
    </lineage>
</organism>
<reference key="1">
    <citation type="submission" date="2006-12" db="EMBL/GenBank/DDBJ databases">
        <title>Complete sequence of Shewanella amazonensis SB2B.</title>
        <authorList>
            <consortium name="US DOE Joint Genome Institute"/>
            <person name="Copeland A."/>
            <person name="Lucas S."/>
            <person name="Lapidus A."/>
            <person name="Barry K."/>
            <person name="Detter J.C."/>
            <person name="Glavina del Rio T."/>
            <person name="Hammon N."/>
            <person name="Israni S."/>
            <person name="Dalin E."/>
            <person name="Tice H."/>
            <person name="Pitluck S."/>
            <person name="Munk A.C."/>
            <person name="Brettin T."/>
            <person name="Bruce D."/>
            <person name="Han C."/>
            <person name="Tapia R."/>
            <person name="Gilna P."/>
            <person name="Schmutz J."/>
            <person name="Larimer F."/>
            <person name="Land M."/>
            <person name="Hauser L."/>
            <person name="Kyrpides N."/>
            <person name="Mikhailova N."/>
            <person name="Fredrickson J."/>
            <person name="Richardson P."/>
        </authorList>
    </citation>
    <scope>NUCLEOTIDE SEQUENCE [LARGE SCALE GENOMIC DNA]</scope>
    <source>
        <strain>ATCC BAA-1098 / SB2B</strain>
    </source>
</reference>
<name>RL15_SHEAM</name>
<protein>
    <recommendedName>
        <fullName evidence="1">Large ribosomal subunit protein uL15</fullName>
    </recommendedName>
    <alternativeName>
        <fullName evidence="3">50S ribosomal protein L15</fullName>
    </alternativeName>
</protein>
<proteinExistence type="inferred from homology"/>
<gene>
    <name evidence="1" type="primary">rplO</name>
    <name type="ordered locus">Sama_0232</name>
</gene>
<feature type="chain" id="PRO_1000054534" description="Large ribosomal subunit protein uL15">
    <location>
        <begin position="1"/>
        <end position="144"/>
    </location>
</feature>
<feature type="region of interest" description="Disordered" evidence="2">
    <location>
        <begin position="1"/>
        <end position="53"/>
    </location>
</feature>
<feature type="compositionally biased region" description="Gly residues" evidence="2">
    <location>
        <begin position="21"/>
        <end position="31"/>
    </location>
</feature>
<feature type="compositionally biased region" description="Gly residues" evidence="2">
    <location>
        <begin position="42"/>
        <end position="52"/>
    </location>
</feature>
<evidence type="ECO:0000255" key="1">
    <source>
        <dbReference type="HAMAP-Rule" id="MF_01341"/>
    </source>
</evidence>
<evidence type="ECO:0000256" key="2">
    <source>
        <dbReference type="SAM" id="MobiDB-lite"/>
    </source>
</evidence>
<evidence type="ECO:0000305" key="3"/>
<sequence>MRLNTLSPAVGAKSAPKRVGRGIGSGLGKTAGRGHKGQKSRSGGGVRPGFEGGQMPLKIRLPKFGFTSRVSMVTAEVRLGELAKVNGDVIDLNALKDANVVTRNIQFAKVVLSGTIERPVTVKGLKVTKGARAAIEAAGGKIEE</sequence>
<keyword id="KW-1185">Reference proteome</keyword>
<keyword id="KW-0687">Ribonucleoprotein</keyword>
<keyword id="KW-0689">Ribosomal protein</keyword>
<keyword id="KW-0694">RNA-binding</keyword>
<keyword id="KW-0699">rRNA-binding</keyword>